<evidence type="ECO:0000250" key="1">
    <source>
        <dbReference type="UniProtKB" id="Q07879"/>
    </source>
</evidence>
<evidence type="ECO:0000269" key="2">
    <source>
    </source>
</evidence>
<evidence type="ECO:0000303" key="3">
    <source>
    </source>
</evidence>
<evidence type="ECO:0000305" key="4"/>
<name>ATG10_GIBZE</name>
<keyword id="KW-0072">Autophagy</keyword>
<keyword id="KW-0472">Membrane</keyword>
<keyword id="KW-0653">Protein transport</keyword>
<keyword id="KW-1185">Reference proteome</keyword>
<keyword id="KW-0808">Transferase</keyword>
<keyword id="KW-0813">Transport</keyword>
<keyword id="KW-0833">Ubl conjugation pathway</keyword>
<feature type="chain" id="PRO_0000443899" description="Ubiquitin-like-conjugating enzyme ATG10">
    <location>
        <begin position="1"/>
        <end position="235"/>
    </location>
</feature>
<feature type="active site" description="Glycyl thioester intermediate" evidence="1">
    <location>
        <position position="196"/>
    </location>
</feature>
<dbReference type="EC" id="2.3.2.-" evidence="1"/>
<dbReference type="EMBL" id="HG970332">
    <property type="protein sequence ID" value="SCB64088.1"/>
    <property type="status" value="ALT_SEQ"/>
    <property type="molecule type" value="Genomic_DNA"/>
</dbReference>
<dbReference type="STRING" id="229533.A0A0E0RMV2"/>
<dbReference type="eggNOG" id="KOG4741">
    <property type="taxonomic scope" value="Eukaryota"/>
</dbReference>
<dbReference type="InParanoid" id="A0A0E0RMV2"/>
<dbReference type="Proteomes" id="UP000070720">
    <property type="component" value="Chromosome 1"/>
</dbReference>
<dbReference type="GO" id="GO:0005829">
    <property type="term" value="C:cytosol"/>
    <property type="evidence" value="ECO:0007669"/>
    <property type="project" value="TreeGrafter"/>
</dbReference>
<dbReference type="GO" id="GO:0034045">
    <property type="term" value="C:phagophore assembly site membrane"/>
    <property type="evidence" value="ECO:0007669"/>
    <property type="project" value="UniProtKB-SubCell"/>
</dbReference>
<dbReference type="GO" id="GO:0061651">
    <property type="term" value="F:Atg12 conjugating enzyme activity"/>
    <property type="evidence" value="ECO:0007669"/>
    <property type="project" value="TreeGrafter"/>
</dbReference>
<dbReference type="GO" id="GO:0000045">
    <property type="term" value="P:autophagosome assembly"/>
    <property type="evidence" value="ECO:0007669"/>
    <property type="project" value="TreeGrafter"/>
</dbReference>
<dbReference type="GO" id="GO:0000422">
    <property type="term" value="P:autophagy of mitochondrion"/>
    <property type="evidence" value="ECO:0007669"/>
    <property type="project" value="TreeGrafter"/>
</dbReference>
<dbReference type="GO" id="GO:0032446">
    <property type="term" value="P:protein modification by small protein conjugation"/>
    <property type="evidence" value="ECO:0007669"/>
    <property type="project" value="TreeGrafter"/>
</dbReference>
<dbReference type="GO" id="GO:0015031">
    <property type="term" value="P:protein transport"/>
    <property type="evidence" value="ECO:0007669"/>
    <property type="project" value="UniProtKB-KW"/>
</dbReference>
<dbReference type="Gene3D" id="3.30.1460.50">
    <property type="match status" value="1"/>
</dbReference>
<dbReference type="InterPro" id="IPR007135">
    <property type="entry name" value="Atg3/Atg10"/>
</dbReference>
<dbReference type="PANTHER" id="PTHR14957">
    <property type="entry name" value="UBIQUITIN-LIKE-CONJUGATING ENZYME ATG10"/>
    <property type="match status" value="1"/>
</dbReference>
<dbReference type="PANTHER" id="PTHR14957:SF1">
    <property type="entry name" value="UBIQUITIN-LIKE-CONJUGATING ENZYME ATG10"/>
    <property type="match status" value="1"/>
</dbReference>
<dbReference type="Pfam" id="PF03987">
    <property type="entry name" value="Autophagy_act_C"/>
    <property type="match status" value="1"/>
</dbReference>
<protein>
    <recommendedName>
        <fullName evidence="1">Ubiquitin-like-conjugating enzyme ATG10</fullName>
        <ecNumber evidence="1">2.3.2.-</ecNumber>
    </recommendedName>
    <alternativeName>
        <fullName evidence="3">Autophagy-related protein 10</fullName>
    </alternativeName>
</protein>
<reference key="1">
    <citation type="journal article" date="2007" name="Science">
        <title>The Fusarium graminearum genome reveals a link between localized polymorphism and pathogen specialization.</title>
        <authorList>
            <person name="Cuomo C.A."/>
            <person name="Gueldener U."/>
            <person name="Xu J.-R."/>
            <person name="Trail F."/>
            <person name="Turgeon B.G."/>
            <person name="Di Pietro A."/>
            <person name="Walton J.D."/>
            <person name="Ma L.-J."/>
            <person name="Baker S.E."/>
            <person name="Rep M."/>
            <person name="Adam G."/>
            <person name="Antoniw J."/>
            <person name="Baldwin T."/>
            <person name="Calvo S.E."/>
            <person name="Chang Y.-L."/>
            <person name="DeCaprio D."/>
            <person name="Gale L.R."/>
            <person name="Gnerre S."/>
            <person name="Goswami R.S."/>
            <person name="Hammond-Kosack K."/>
            <person name="Harris L.J."/>
            <person name="Hilburn K."/>
            <person name="Kennell J.C."/>
            <person name="Kroken S."/>
            <person name="Magnuson J.K."/>
            <person name="Mannhaupt G."/>
            <person name="Mauceli E.W."/>
            <person name="Mewes H.-W."/>
            <person name="Mitterbauer R."/>
            <person name="Muehlbauer G."/>
            <person name="Muensterkoetter M."/>
            <person name="Nelson D."/>
            <person name="O'Donnell K."/>
            <person name="Ouellet T."/>
            <person name="Qi W."/>
            <person name="Quesneville H."/>
            <person name="Roncero M.I.G."/>
            <person name="Seong K.-Y."/>
            <person name="Tetko I.V."/>
            <person name="Urban M."/>
            <person name="Waalwijk C."/>
            <person name="Ward T.J."/>
            <person name="Yao J."/>
            <person name="Birren B.W."/>
            <person name="Kistler H.C."/>
        </authorList>
    </citation>
    <scope>NUCLEOTIDE SEQUENCE [LARGE SCALE GENOMIC DNA]</scope>
    <source>
        <strain>ATCC MYA-4620 / CBS 123657 / FGSC 9075 / NRRL 31084 / PH-1</strain>
    </source>
</reference>
<reference key="2">
    <citation type="journal article" date="2010" name="Nature">
        <title>Comparative genomics reveals mobile pathogenicity chromosomes in Fusarium.</title>
        <authorList>
            <person name="Ma L.-J."/>
            <person name="van der Does H.C."/>
            <person name="Borkovich K.A."/>
            <person name="Coleman J.J."/>
            <person name="Daboussi M.-J."/>
            <person name="Di Pietro A."/>
            <person name="Dufresne M."/>
            <person name="Freitag M."/>
            <person name="Grabherr M."/>
            <person name="Henrissat B."/>
            <person name="Houterman P.M."/>
            <person name="Kang S."/>
            <person name="Shim W.-B."/>
            <person name="Woloshuk C."/>
            <person name="Xie X."/>
            <person name="Xu J.-R."/>
            <person name="Antoniw J."/>
            <person name="Baker S.E."/>
            <person name="Bluhm B.H."/>
            <person name="Breakspear A."/>
            <person name="Brown D.W."/>
            <person name="Butchko R.A.E."/>
            <person name="Chapman S."/>
            <person name="Coulson R."/>
            <person name="Coutinho P.M."/>
            <person name="Danchin E.G.J."/>
            <person name="Diener A."/>
            <person name="Gale L.R."/>
            <person name="Gardiner D.M."/>
            <person name="Goff S."/>
            <person name="Hammond-Kosack K.E."/>
            <person name="Hilburn K."/>
            <person name="Hua-Van A."/>
            <person name="Jonkers W."/>
            <person name="Kazan K."/>
            <person name="Kodira C.D."/>
            <person name="Koehrsen M."/>
            <person name="Kumar L."/>
            <person name="Lee Y.-H."/>
            <person name="Li L."/>
            <person name="Manners J.M."/>
            <person name="Miranda-Saavedra D."/>
            <person name="Mukherjee M."/>
            <person name="Park G."/>
            <person name="Park J."/>
            <person name="Park S.-Y."/>
            <person name="Proctor R.H."/>
            <person name="Regev A."/>
            <person name="Ruiz-Roldan M.C."/>
            <person name="Sain D."/>
            <person name="Sakthikumar S."/>
            <person name="Sykes S."/>
            <person name="Schwartz D.C."/>
            <person name="Turgeon B.G."/>
            <person name="Wapinski I."/>
            <person name="Yoder O."/>
            <person name="Young S."/>
            <person name="Zeng Q."/>
            <person name="Zhou S."/>
            <person name="Galagan J."/>
            <person name="Cuomo C.A."/>
            <person name="Kistler H.C."/>
            <person name="Rep M."/>
        </authorList>
    </citation>
    <scope>GENOME REANNOTATION</scope>
    <source>
        <strain>ATCC MYA-4620 / CBS 123657 / FGSC 9075 / NRRL 31084 / PH-1</strain>
    </source>
</reference>
<reference key="3">
    <citation type="journal article" date="2015" name="BMC Genomics">
        <title>The completed genome sequence of the pathogenic ascomycete fungus Fusarium graminearum.</title>
        <authorList>
            <person name="King R."/>
            <person name="Urban M."/>
            <person name="Hammond-Kosack M.C.U."/>
            <person name="Hassani-Pak K."/>
            <person name="Hammond-Kosack K.E."/>
        </authorList>
    </citation>
    <scope>NUCLEOTIDE SEQUENCE [LARGE SCALE GENOMIC DNA]</scope>
    <source>
        <strain>ATCC MYA-4620 / CBS 123657 / FGSC 9075 / NRRL 31084 / PH-1</strain>
    </source>
</reference>
<reference key="4">
    <citation type="journal article" date="2017" name="Sci. Rep.">
        <title>Genome-wide functional analysis reveals that autophagy is necessary for growth, sporulation, deoxynivalenol production and virulence in Fusarium graminearum.</title>
        <authorList>
            <person name="Lv W."/>
            <person name="Wang C."/>
            <person name="Yang N."/>
            <person name="Que Y."/>
            <person name="Talbot N.J."/>
            <person name="Wang Z."/>
        </authorList>
    </citation>
    <scope>IDENTIFICATION</scope>
    <scope>FUNCTION</scope>
    <scope>DISRUPTION PHENOTYPE</scope>
</reference>
<proteinExistence type="inferred from homology"/>
<sequence length="235" mass="26569">MSIENFPSLNSEEFTEACHHLDRQYCQAPLGSERARWKLRLCNALCTDFSYGGGFTTYVQIRRPLEFDLDHGDLSLDLDGFSFSDEKGPHVSIAEDKDMLDAEEADEAALIRQRARPEIAMVEYEIHLHPTYRVPCLWFTLRNLPADEPAFDVDTVFRRLVPDEYKAGLRTLGNVGGISADHHPITGVPSFFVHPCLLGDAISKFECDRTNYLMIWLGLVGGCVGLWVPKEMAMQ</sequence>
<organism>
    <name type="scientific">Gibberella zeae (strain ATCC MYA-4620 / CBS 123657 / FGSC 9075 / NRRL 31084 / PH-1)</name>
    <name type="common">Wheat head blight fungus</name>
    <name type="synonym">Fusarium graminearum</name>
    <dbReference type="NCBI Taxonomy" id="229533"/>
    <lineage>
        <taxon>Eukaryota</taxon>
        <taxon>Fungi</taxon>
        <taxon>Dikarya</taxon>
        <taxon>Ascomycota</taxon>
        <taxon>Pezizomycotina</taxon>
        <taxon>Sordariomycetes</taxon>
        <taxon>Hypocreomycetidae</taxon>
        <taxon>Hypocreales</taxon>
        <taxon>Nectriaceae</taxon>
        <taxon>Fusarium</taxon>
    </lineage>
</organism>
<gene>
    <name evidence="3" type="primary">ATG10</name>
    <name type="ORF">FG00611</name>
    <name type="ORF">FGRAMPH1_01T01553</name>
</gene>
<accession>A0A0E0RMV2</accession>
<accession>A0A1C3YHT0</accession>
<comment type="function">
    <text evidence="1 2">E2-like enzyme required for the cytoplasm to vacuole transport (Cvt), autophagy and nucleophagy (By similarity). Acts as an E2-like enzyme that catalyzes the conjugation of ATG12 to ATG5 (By similarity). ATG12 conjugation to ATG5 is required for proper localization of ATG8 to the preautophagosomal structure (PAS) (By similarity). Likely serves as an ATG5-recognition molecule (By similarity). Autophagy is required for proper vegetative growth, asexual/sexual reproduction, and full virulence (PubMed:28894236). Autophagy is particularly involved in the biosynthesis of deoxynivalenol (DON), an important virulence determinant (PubMed:28894236).</text>
</comment>
<comment type="subunit">
    <text evidence="1">Forms homooligomers (By similarity). Interacts with ATG7 and ATG12 (By similarity).</text>
</comment>
<comment type="subcellular location">
    <subcellularLocation>
        <location evidence="1">Preautophagosomal structure membrane</location>
        <topology evidence="1">Peripheral membrane protein</topology>
    </subcellularLocation>
</comment>
<comment type="disruption phenotype">
    <text evidence="2">Significantly decreases the radial growth of colonies under nutrient-rich conditions (PubMed:28894236).</text>
</comment>
<comment type="similarity">
    <text evidence="4">Belongs to the ATG10 family.</text>
</comment>
<comment type="sequence caution" evidence="4">
    <conflict type="erroneous gene model prediction">
        <sequence resource="EMBL-CDS" id="SCB64088"/>
    </conflict>
</comment>